<organism>
    <name type="scientific">Yersinia pestis</name>
    <dbReference type="NCBI Taxonomy" id="632"/>
    <lineage>
        <taxon>Bacteria</taxon>
        <taxon>Pseudomonadati</taxon>
        <taxon>Pseudomonadota</taxon>
        <taxon>Gammaproteobacteria</taxon>
        <taxon>Enterobacterales</taxon>
        <taxon>Yersiniaceae</taxon>
        <taxon>Yersinia</taxon>
    </lineage>
</organism>
<comment type="subunit">
    <text evidence="1">Part of the 50S ribosomal subunit.</text>
</comment>
<comment type="induction">
    <text>May be induced under zinc-limiting conditions; in that case may be repressed by the zinc uptake regulation protein zur.</text>
</comment>
<comment type="similarity">
    <text evidence="2">Belongs to the bacterial ribosomal protein bL31 family. Type B subfamily.</text>
</comment>
<comment type="sequence caution" evidence="2">
    <conflict type="erroneous initiation">
        <sequence resource="EMBL-CDS" id="AAM84629"/>
    </conflict>
</comment>
<comment type="sequence caution" evidence="2">
    <conflict type="erroneous initiation">
        <sequence resource="EMBL-CDS" id="AAS61062"/>
    </conflict>
</comment>
<protein>
    <recommendedName>
        <fullName evidence="2">Large ribosomal subunit protein bL31B</fullName>
    </recommendedName>
    <alternativeName>
        <fullName>50S ribosomal protein L31 type B</fullName>
    </alternativeName>
</protein>
<keyword id="KW-1185">Reference proteome</keyword>
<keyword id="KW-0687">Ribonucleoprotein</keyword>
<keyword id="KW-0689">Ribosomal protein</keyword>
<evidence type="ECO:0000250" key="1"/>
<evidence type="ECO:0000305" key="2"/>
<gene>
    <name type="primary">rpmE2</name>
    <name type="ordered locus">YPO3134</name>
    <name type="ordered locus">y1048</name>
    <name type="ordered locus">YP_0797</name>
</gene>
<dbReference type="EMBL" id="AL590842">
    <property type="protein sequence ID" value="CAL21729.1"/>
    <property type="molecule type" value="Genomic_DNA"/>
</dbReference>
<dbReference type="EMBL" id="AE009952">
    <property type="protein sequence ID" value="AAM84629.1"/>
    <property type="status" value="ALT_INIT"/>
    <property type="molecule type" value="Genomic_DNA"/>
</dbReference>
<dbReference type="EMBL" id="AE017042">
    <property type="protein sequence ID" value="AAS61062.1"/>
    <property type="status" value="ALT_INIT"/>
    <property type="molecule type" value="Genomic_DNA"/>
</dbReference>
<dbReference type="PIR" id="AF0380">
    <property type="entry name" value="AF0380"/>
</dbReference>
<dbReference type="RefSeq" id="WP_002208617.1">
    <property type="nucleotide sequence ID" value="NZ_WUCM01000009.1"/>
</dbReference>
<dbReference type="RefSeq" id="YP_002348039.1">
    <property type="nucleotide sequence ID" value="NC_003143.1"/>
</dbReference>
<dbReference type="SMR" id="P58472"/>
<dbReference type="STRING" id="214092.YPO3134"/>
<dbReference type="PaxDb" id="214092-YPO3134"/>
<dbReference type="EnsemblBacteria" id="AAS61062">
    <property type="protein sequence ID" value="AAS61062"/>
    <property type="gene ID" value="YP_0797"/>
</dbReference>
<dbReference type="KEGG" id="ype:YPO3134"/>
<dbReference type="KEGG" id="ypk:y1048"/>
<dbReference type="KEGG" id="ypm:YP_0797"/>
<dbReference type="PATRIC" id="fig|214092.21.peg.3591"/>
<dbReference type="eggNOG" id="COG0254">
    <property type="taxonomic scope" value="Bacteria"/>
</dbReference>
<dbReference type="HOGENOM" id="CLU_114306_2_1_6"/>
<dbReference type="OMA" id="YRLVAFK"/>
<dbReference type="OrthoDB" id="9803251at2"/>
<dbReference type="Proteomes" id="UP000000815">
    <property type="component" value="Chromosome"/>
</dbReference>
<dbReference type="Proteomes" id="UP000001019">
    <property type="component" value="Chromosome"/>
</dbReference>
<dbReference type="Proteomes" id="UP000002490">
    <property type="component" value="Chromosome"/>
</dbReference>
<dbReference type="GO" id="GO:1990904">
    <property type="term" value="C:ribonucleoprotein complex"/>
    <property type="evidence" value="ECO:0007669"/>
    <property type="project" value="UniProtKB-KW"/>
</dbReference>
<dbReference type="GO" id="GO:0005840">
    <property type="term" value="C:ribosome"/>
    <property type="evidence" value="ECO:0007669"/>
    <property type="project" value="UniProtKB-KW"/>
</dbReference>
<dbReference type="GO" id="GO:0003735">
    <property type="term" value="F:structural constituent of ribosome"/>
    <property type="evidence" value="ECO:0007669"/>
    <property type="project" value="InterPro"/>
</dbReference>
<dbReference type="GO" id="GO:0006412">
    <property type="term" value="P:translation"/>
    <property type="evidence" value="ECO:0007669"/>
    <property type="project" value="UniProtKB-UniRule"/>
</dbReference>
<dbReference type="Gene3D" id="4.10.830.30">
    <property type="entry name" value="Ribosomal protein L31"/>
    <property type="match status" value="1"/>
</dbReference>
<dbReference type="HAMAP" id="MF_00502">
    <property type="entry name" value="Ribosomal_bL31_2"/>
    <property type="match status" value="1"/>
</dbReference>
<dbReference type="InterPro" id="IPR034704">
    <property type="entry name" value="Ribosomal_bL28/bL31-like_sf"/>
</dbReference>
<dbReference type="InterPro" id="IPR002150">
    <property type="entry name" value="Ribosomal_bL31"/>
</dbReference>
<dbReference type="InterPro" id="IPR027493">
    <property type="entry name" value="Ribosomal_bL31_B"/>
</dbReference>
<dbReference type="InterPro" id="IPR042105">
    <property type="entry name" value="Ribosomal_bL31_sf"/>
</dbReference>
<dbReference type="NCBIfam" id="TIGR00105">
    <property type="entry name" value="L31"/>
    <property type="match status" value="1"/>
</dbReference>
<dbReference type="NCBIfam" id="NF002462">
    <property type="entry name" value="PRK01678.1"/>
    <property type="match status" value="1"/>
</dbReference>
<dbReference type="PANTHER" id="PTHR33280">
    <property type="entry name" value="50S RIBOSOMAL PROTEIN L31, CHLOROPLASTIC"/>
    <property type="match status" value="1"/>
</dbReference>
<dbReference type="PANTHER" id="PTHR33280:SF1">
    <property type="entry name" value="LARGE RIBOSOMAL SUBUNIT PROTEIN BL31C"/>
    <property type="match status" value="1"/>
</dbReference>
<dbReference type="Pfam" id="PF01197">
    <property type="entry name" value="Ribosomal_L31"/>
    <property type="match status" value="1"/>
</dbReference>
<dbReference type="PRINTS" id="PR01249">
    <property type="entry name" value="RIBOSOMALL31"/>
</dbReference>
<dbReference type="SUPFAM" id="SSF143800">
    <property type="entry name" value="L28p-like"/>
    <property type="match status" value="1"/>
</dbReference>
<sequence length="86" mass="9795">MKPNIHPPYRTVVFHDTSADAYFTVGSTIATERTIERDGQTYPYVTLDISSASHPYYTGKQKEFAKEGSTARFHQRFGSFLTKKTN</sequence>
<accession>P58472</accession>
<accession>Q0WCE9</accession>
<proteinExistence type="evidence at transcript level"/>
<name>RL31B_YERPE</name>
<reference key="1">
    <citation type="journal article" date="2001" name="Nature">
        <title>Genome sequence of Yersinia pestis, the causative agent of plague.</title>
        <authorList>
            <person name="Parkhill J."/>
            <person name="Wren B.W."/>
            <person name="Thomson N.R."/>
            <person name="Titball R.W."/>
            <person name="Holden M.T.G."/>
            <person name="Prentice M.B."/>
            <person name="Sebaihia M."/>
            <person name="James K.D."/>
            <person name="Churcher C.M."/>
            <person name="Mungall K.L."/>
            <person name="Baker S."/>
            <person name="Basham D."/>
            <person name="Bentley S.D."/>
            <person name="Brooks K."/>
            <person name="Cerdeno-Tarraga A.-M."/>
            <person name="Chillingworth T."/>
            <person name="Cronin A."/>
            <person name="Davies R.M."/>
            <person name="Davis P."/>
            <person name="Dougan G."/>
            <person name="Feltwell T."/>
            <person name="Hamlin N."/>
            <person name="Holroyd S."/>
            <person name="Jagels K."/>
            <person name="Karlyshev A.V."/>
            <person name="Leather S."/>
            <person name="Moule S."/>
            <person name="Oyston P.C.F."/>
            <person name="Quail M.A."/>
            <person name="Rutherford K.M."/>
            <person name="Simmonds M."/>
            <person name="Skelton J."/>
            <person name="Stevens K."/>
            <person name="Whitehead S."/>
            <person name="Barrell B.G."/>
        </authorList>
    </citation>
    <scope>NUCLEOTIDE SEQUENCE [LARGE SCALE GENOMIC DNA]</scope>
    <source>
        <strain>CO-92 / Biovar Orientalis</strain>
    </source>
</reference>
<reference key="2">
    <citation type="journal article" date="2002" name="J. Bacteriol.">
        <title>Genome sequence of Yersinia pestis KIM.</title>
        <authorList>
            <person name="Deng W."/>
            <person name="Burland V."/>
            <person name="Plunkett G. III"/>
            <person name="Boutin A."/>
            <person name="Mayhew G.F."/>
            <person name="Liss P."/>
            <person name="Perna N.T."/>
            <person name="Rose D.J."/>
            <person name="Mau B."/>
            <person name="Zhou S."/>
            <person name="Schwartz D.C."/>
            <person name="Fetherston J.D."/>
            <person name="Lindler L.E."/>
            <person name="Brubaker R.R."/>
            <person name="Plano G.V."/>
            <person name="Straley S.C."/>
            <person name="McDonough K.A."/>
            <person name="Nilles M.L."/>
            <person name="Matson J.S."/>
            <person name="Blattner F.R."/>
            <person name="Perry R.D."/>
        </authorList>
    </citation>
    <scope>NUCLEOTIDE SEQUENCE [LARGE SCALE GENOMIC DNA]</scope>
    <source>
        <strain>KIM10+ / Biovar Mediaevalis</strain>
    </source>
</reference>
<reference key="3">
    <citation type="journal article" date="2004" name="DNA Res.">
        <title>Complete genome sequence of Yersinia pestis strain 91001, an isolate avirulent to humans.</title>
        <authorList>
            <person name="Song Y."/>
            <person name="Tong Z."/>
            <person name="Wang J."/>
            <person name="Wang L."/>
            <person name="Guo Z."/>
            <person name="Han Y."/>
            <person name="Zhang J."/>
            <person name="Pei D."/>
            <person name="Zhou D."/>
            <person name="Qin H."/>
            <person name="Pang X."/>
            <person name="Han Y."/>
            <person name="Zhai J."/>
            <person name="Li M."/>
            <person name="Cui B."/>
            <person name="Qi Z."/>
            <person name="Jin L."/>
            <person name="Dai R."/>
            <person name="Chen F."/>
            <person name="Li S."/>
            <person name="Ye C."/>
            <person name="Du Z."/>
            <person name="Lin W."/>
            <person name="Wang J."/>
            <person name="Yu J."/>
            <person name="Yang H."/>
            <person name="Wang J."/>
            <person name="Huang P."/>
            <person name="Yang R."/>
        </authorList>
    </citation>
    <scope>NUCLEOTIDE SEQUENCE [LARGE SCALE GENOMIC DNA]</scope>
    <source>
        <strain>91001 / Biovar Mediaevalis</strain>
    </source>
</reference>
<reference key="4">
    <citation type="journal article" date="2003" name="Proc. Natl. Acad. Sci. U.S.A.">
        <title>Comparative genomics of bacterial zinc regulons: enhanced ion transport, pathogenesis, and rearrangement of ribosomal proteins.</title>
        <authorList>
            <person name="Panina E.M."/>
            <person name="Mironov A.A."/>
            <person name="Gelfand M.S."/>
        </authorList>
    </citation>
    <scope>DISCUSSION OF POSSIBLE REGULATION</scope>
    <source>
        <strain>CO-92 / Biovar Orientalis</strain>
    </source>
</reference>
<feature type="chain" id="PRO_0000173289" description="Large ribosomal subunit protein bL31B">
    <location>
        <begin position="1"/>
        <end position="86"/>
    </location>
</feature>